<dbReference type="EMBL" id="X55942">
    <property type="protein sequence ID" value="CAA39411.1"/>
    <property type="molecule type" value="Genomic_DNA"/>
</dbReference>
<dbReference type="EMBL" id="AL939123">
    <property type="protein sequence ID" value="CAB45609.1"/>
    <property type="molecule type" value="Genomic_DNA"/>
</dbReference>
<dbReference type="PIR" id="T35614">
    <property type="entry name" value="T35614"/>
</dbReference>
<dbReference type="RefSeq" id="NP_629457.1">
    <property type="nucleotide sequence ID" value="NC_003888.3"/>
</dbReference>
<dbReference type="RefSeq" id="WP_003973657.1">
    <property type="nucleotide sequence ID" value="NZ_VNID01000040.1"/>
</dbReference>
<dbReference type="PDB" id="2KF2">
    <property type="method" value="NMR"/>
    <property type="chains" value="A=1-159"/>
</dbReference>
<dbReference type="PDB" id="3TL1">
    <property type="method" value="X-ray"/>
    <property type="resolution" value="1.80 A"/>
    <property type="chains" value="A/B=1-159"/>
</dbReference>
<dbReference type="PDB" id="3TVR">
    <property type="method" value="X-ray"/>
    <property type="resolution" value="1.80 A"/>
    <property type="chains" value="A=1-159"/>
</dbReference>
<dbReference type="PDBsum" id="2KF2"/>
<dbReference type="PDBsum" id="3TL1"/>
<dbReference type="PDBsum" id="3TVR"/>
<dbReference type="BMRB" id="P23154"/>
<dbReference type="SMR" id="P23154"/>
<dbReference type="STRING" id="100226.gene:17762965"/>
<dbReference type="PaxDb" id="100226-SCO5315"/>
<dbReference type="KEGG" id="sco:SCO5315"/>
<dbReference type="PATRIC" id="fig|100226.15.peg.5401"/>
<dbReference type="eggNOG" id="COG2867">
    <property type="taxonomic scope" value="Bacteria"/>
</dbReference>
<dbReference type="HOGENOM" id="CLU_1651183_0_0_11"/>
<dbReference type="InParanoid" id="P23154"/>
<dbReference type="OrthoDB" id="156693at2"/>
<dbReference type="PhylomeDB" id="P23154"/>
<dbReference type="EvolutionaryTrace" id="P23154"/>
<dbReference type="Proteomes" id="UP000001973">
    <property type="component" value="Chromosome"/>
</dbReference>
<dbReference type="CDD" id="cd08860">
    <property type="entry name" value="TcmN_ARO-CYC_like"/>
    <property type="match status" value="1"/>
</dbReference>
<dbReference type="Gene3D" id="3.30.530.20">
    <property type="match status" value="1"/>
</dbReference>
<dbReference type="InterPro" id="IPR005031">
    <property type="entry name" value="COQ10_START"/>
</dbReference>
<dbReference type="InterPro" id="IPR023393">
    <property type="entry name" value="START-like_dom_sf"/>
</dbReference>
<dbReference type="Pfam" id="PF03364">
    <property type="entry name" value="Polyketide_cyc"/>
    <property type="match status" value="1"/>
</dbReference>
<dbReference type="SUPFAM" id="SSF55961">
    <property type="entry name" value="Bet v1-like"/>
    <property type="match status" value="1"/>
</dbReference>
<accession>P23154</accession>
<gene>
    <name type="ordered locus">SCO5315</name>
    <name type="ORF">SC6G9.18</name>
</gene>
<proteinExistence type="evidence at protein level"/>
<protein>
    <recommendedName>
        <fullName>Putative polyketide cyclase</fullName>
    </recommendedName>
    <alternativeName>
        <fullName>WhiE ORF VI</fullName>
    </alternativeName>
</protein>
<organism>
    <name type="scientific">Streptomyces coelicolor (strain ATCC BAA-471 / A3(2) / M145)</name>
    <dbReference type="NCBI Taxonomy" id="100226"/>
    <lineage>
        <taxon>Bacteria</taxon>
        <taxon>Bacillati</taxon>
        <taxon>Actinomycetota</taxon>
        <taxon>Actinomycetes</taxon>
        <taxon>Kitasatosporales</taxon>
        <taxon>Streptomycetaceae</taxon>
        <taxon>Streptomyces</taxon>
        <taxon>Streptomyces albidoflavus group</taxon>
    </lineage>
</organism>
<evidence type="ECO:0000305" key="1"/>
<evidence type="ECO:0007829" key="2">
    <source>
        <dbReference type="PDB" id="3TL1"/>
    </source>
</evidence>
<evidence type="ECO:0007829" key="3">
    <source>
        <dbReference type="PDB" id="3TVR"/>
    </source>
</evidence>
<sequence length="159" mass="18197">MAGHTDNEITIAAPMELVWNMTNDIEKWPGLFSEYASVEVLGRDDDKVTFRLTMHPDADGKVWSWVSERVADPVTRTVRAQRVETGPFQYMNIVWEYAETAEGTVMRWTQDFAMKPDAPVDDAWMTDNINRNSRTQMALIRDRIEQAAGERRTASVLAD</sequence>
<comment type="function">
    <text>Involved in developmentally regulated synthesis of a compound biosynthetically related to polyketide antibiotics which is essential for spore color in Streptomyces coelicolor.</text>
</comment>
<comment type="similarity">
    <text evidence="1">To polyketide cyclases.</text>
</comment>
<reference key="1">
    <citation type="journal article" date="1990" name="Mol. Microbiol.">
        <title>Spore colour in Streptomyces coelicolor A3(2) involves the developmentally regulated synthesis of a compound biosynthetically related to polyketide antibiotics.</title>
        <authorList>
            <person name="Davis N.K."/>
            <person name="Chater K.F."/>
            <person name="Bruton C.J."/>
        </authorList>
    </citation>
    <scope>NUCLEOTIDE SEQUENCE [GENOMIC DNA]</scope>
    <source>
        <strain>A3(2) / NRRL B-16638</strain>
    </source>
</reference>
<reference key="2">
    <citation type="journal article" date="2002" name="Nature">
        <title>Complete genome sequence of the model actinomycete Streptomyces coelicolor A3(2).</title>
        <authorList>
            <person name="Bentley S.D."/>
            <person name="Chater K.F."/>
            <person name="Cerdeno-Tarraga A.-M."/>
            <person name="Challis G.L."/>
            <person name="Thomson N.R."/>
            <person name="James K.D."/>
            <person name="Harris D.E."/>
            <person name="Quail M.A."/>
            <person name="Kieser H."/>
            <person name="Harper D."/>
            <person name="Bateman A."/>
            <person name="Brown S."/>
            <person name="Chandra G."/>
            <person name="Chen C.W."/>
            <person name="Collins M."/>
            <person name="Cronin A."/>
            <person name="Fraser A."/>
            <person name="Goble A."/>
            <person name="Hidalgo J."/>
            <person name="Hornsby T."/>
            <person name="Howarth S."/>
            <person name="Huang C.-H."/>
            <person name="Kieser T."/>
            <person name="Larke L."/>
            <person name="Murphy L.D."/>
            <person name="Oliver K."/>
            <person name="O'Neil S."/>
            <person name="Rabbinowitsch E."/>
            <person name="Rajandream M.A."/>
            <person name="Rutherford K.M."/>
            <person name="Rutter S."/>
            <person name="Seeger K."/>
            <person name="Saunders D."/>
            <person name="Sharp S."/>
            <person name="Squares R."/>
            <person name="Squares S."/>
            <person name="Taylor K."/>
            <person name="Warren T."/>
            <person name="Wietzorrek A."/>
            <person name="Woodward J.R."/>
            <person name="Barrell B.G."/>
            <person name="Parkhill J."/>
            <person name="Hopwood D.A."/>
        </authorList>
    </citation>
    <scope>NUCLEOTIDE SEQUENCE [LARGE SCALE GENOMIC DNA]</scope>
    <source>
        <strain>ATCC BAA-471 / A3(2) / M145</strain>
    </source>
</reference>
<feature type="chain" id="PRO_0000079757" description="Putative polyketide cyclase">
    <location>
        <begin position="1"/>
        <end position="159"/>
    </location>
</feature>
<feature type="strand" evidence="2">
    <location>
        <begin position="3"/>
        <end position="13"/>
    </location>
</feature>
<feature type="helix" evidence="2">
    <location>
        <begin position="15"/>
        <end position="22"/>
    </location>
</feature>
<feature type="helix" evidence="2">
    <location>
        <begin position="25"/>
        <end position="27"/>
    </location>
</feature>
<feature type="helix" evidence="2">
    <location>
        <begin position="28"/>
        <end position="31"/>
    </location>
</feature>
<feature type="strand" evidence="2">
    <location>
        <begin position="33"/>
        <end position="43"/>
    </location>
</feature>
<feature type="strand" evidence="2">
    <location>
        <begin position="45"/>
        <end position="54"/>
    </location>
</feature>
<feature type="strand" evidence="2">
    <location>
        <begin position="64"/>
        <end position="72"/>
    </location>
</feature>
<feature type="turn" evidence="2">
    <location>
        <begin position="73"/>
        <end position="76"/>
    </location>
</feature>
<feature type="strand" evidence="2">
    <location>
        <begin position="77"/>
        <end position="84"/>
    </location>
</feature>
<feature type="strand" evidence="2">
    <location>
        <begin position="88"/>
        <end position="100"/>
    </location>
</feature>
<feature type="strand" evidence="2">
    <location>
        <begin position="103"/>
        <end position="114"/>
    </location>
</feature>
<feature type="strand" evidence="3">
    <location>
        <begin position="118"/>
        <end position="120"/>
    </location>
</feature>
<feature type="helix" evidence="2">
    <location>
        <begin position="122"/>
        <end position="157"/>
    </location>
</feature>
<keyword id="KW-0002">3D-structure</keyword>
<keyword id="KW-1185">Reference proteome</keyword>
<name>CYPC_STRCO</name>